<feature type="chain" id="PRO_1000079495" description="NAD kinase">
    <location>
        <begin position="1"/>
        <end position="292"/>
    </location>
</feature>
<feature type="active site" description="Proton acceptor" evidence="1">
    <location>
        <position position="73"/>
    </location>
</feature>
<feature type="binding site" evidence="1">
    <location>
        <begin position="73"/>
        <end position="74"/>
    </location>
    <ligand>
        <name>NAD(+)</name>
        <dbReference type="ChEBI" id="CHEBI:57540"/>
    </ligand>
</feature>
<feature type="binding site" evidence="1">
    <location>
        <begin position="147"/>
        <end position="148"/>
    </location>
    <ligand>
        <name>NAD(+)</name>
        <dbReference type="ChEBI" id="CHEBI:57540"/>
    </ligand>
</feature>
<feature type="binding site" evidence="1">
    <location>
        <position position="158"/>
    </location>
    <ligand>
        <name>NAD(+)</name>
        <dbReference type="ChEBI" id="CHEBI:57540"/>
    </ligand>
</feature>
<feature type="binding site" evidence="1">
    <location>
        <position position="175"/>
    </location>
    <ligand>
        <name>NAD(+)</name>
        <dbReference type="ChEBI" id="CHEBI:57540"/>
    </ligand>
</feature>
<feature type="binding site" evidence="1">
    <location>
        <position position="177"/>
    </location>
    <ligand>
        <name>NAD(+)</name>
        <dbReference type="ChEBI" id="CHEBI:57540"/>
    </ligand>
</feature>
<feature type="binding site" evidence="1">
    <location>
        <begin position="188"/>
        <end position="193"/>
    </location>
    <ligand>
        <name>NAD(+)</name>
        <dbReference type="ChEBI" id="CHEBI:57540"/>
    </ligand>
</feature>
<feature type="binding site" evidence="1">
    <location>
        <position position="247"/>
    </location>
    <ligand>
        <name>NAD(+)</name>
        <dbReference type="ChEBI" id="CHEBI:57540"/>
    </ligand>
</feature>
<dbReference type="EC" id="2.7.1.23" evidence="1"/>
<dbReference type="EMBL" id="CP000243">
    <property type="protein sequence ID" value="ABE08405.1"/>
    <property type="molecule type" value="Genomic_DNA"/>
</dbReference>
<dbReference type="RefSeq" id="WP_001059176.1">
    <property type="nucleotide sequence ID" value="NZ_CP064825.1"/>
</dbReference>
<dbReference type="SMR" id="Q1R8A9"/>
<dbReference type="KEGG" id="eci:UTI89_C2949"/>
<dbReference type="HOGENOM" id="CLU_008831_0_1_6"/>
<dbReference type="Proteomes" id="UP000001952">
    <property type="component" value="Chromosome"/>
</dbReference>
<dbReference type="GO" id="GO:0005737">
    <property type="term" value="C:cytoplasm"/>
    <property type="evidence" value="ECO:0007669"/>
    <property type="project" value="UniProtKB-SubCell"/>
</dbReference>
<dbReference type="GO" id="GO:0005524">
    <property type="term" value="F:ATP binding"/>
    <property type="evidence" value="ECO:0007669"/>
    <property type="project" value="UniProtKB-KW"/>
</dbReference>
<dbReference type="GO" id="GO:0046872">
    <property type="term" value="F:metal ion binding"/>
    <property type="evidence" value="ECO:0007669"/>
    <property type="project" value="UniProtKB-UniRule"/>
</dbReference>
<dbReference type="GO" id="GO:0051287">
    <property type="term" value="F:NAD binding"/>
    <property type="evidence" value="ECO:0007669"/>
    <property type="project" value="UniProtKB-ARBA"/>
</dbReference>
<dbReference type="GO" id="GO:0003951">
    <property type="term" value="F:NAD+ kinase activity"/>
    <property type="evidence" value="ECO:0007669"/>
    <property type="project" value="UniProtKB-UniRule"/>
</dbReference>
<dbReference type="GO" id="GO:0019674">
    <property type="term" value="P:NAD metabolic process"/>
    <property type="evidence" value="ECO:0007669"/>
    <property type="project" value="InterPro"/>
</dbReference>
<dbReference type="GO" id="GO:0006741">
    <property type="term" value="P:NADP biosynthetic process"/>
    <property type="evidence" value="ECO:0007669"/>
    <property type="project" value="UniProtKB-UniRule"/>
</dbReference>
<dbReference type="FunFam" id="2.60.200.30:FF:000001">
    <property type="entry name" value="NAD kinase"/>
    <property type="match status" value="1"/>
</dbReference>
<dbReference type="FunFam" id="3.40.50.10330:FF:000004">
    <property type="entry name" value="NAD kinase"/>
    <property type="match status" value="1"/>
</dbReference>
<dbReference type="Gene3D" id="3.40.50.10330">
    <property type="entry name" value="Probable inorganic polyphosphate/atp-NAD kinase, domain 1"/>
    <property type="match status" value="1"/>
</dbReference>
<dbReference type="Gene3D" id="2.60.200.30">
    <property type="entry name" value="Probable inorganic polyphosphate/atp-NAD kinase, domain 2"/>
    <property type="match status" value="1"/>
</dbReference>
<dbReference type="HAMAP" id="MF_00361">
    <property type="entry name" value="NAD_kinase"/>
    <property type="match status" value="1"/>
</dbReference>
<dbReference type="InterPro" id="IPR017438">
    <property type="entry name" value="ATP-NAD_kinase_N"/>
</dbReference>
<dbReference type="InterPro" id="IPR017437">
    <property type="entry name" value="ATP-NAD_kinase_PpnK-typ_C"/>
</dbReference>
<dbReference type="InterPro" id="IPR016064">
    <property type="entry name" value="NAD/diacylglycerol_kinase_sf"/>
</dbReference>
<dbReference type="InterPro" id="IPR002504">
    <property type="entry name" value="NADK"/>
</dbReference>
<dbReference type="NCBIfam" id="NF002306">
    <property type="entry name" value="PRK01231.1"/>
    <property type="match status" value="1"/>
</dbReference>
<dbReference type="NCBIfam" id="NF002893">
    <property type="entry name" value="PRK03378.1"/>
    <property type="match status" value="1"/>
</dbReference>
<dbReference type="PANTHER" id="PTHR20275">
    <property type="entry name" value="NAD KINASE"/>
    <property type="match status" value="1"/>
</dbReference>
<dbReference type="PANTHER" id="PTHR20275:SF0">
    <property type="entry name" value="NAD KINASE"/>
    <property type="match status" value="1"/>
</dbReference>
<dbReference type="Pfam" id="PF01513">
    <property type="entry name" value="NAD_kinase"/>
    <property type="match status" value="1"/>
</dbReference>
<dbReference type="Pfam" id="PF20143">
    <property type="entry name" value="NAD_kinase_C"/>
    <property type="match status" value="1"/>
</dbReference>
<dbReference type="SUPFAM" id="SSF111331">
    <property type="entry name" value="NAD kinase/diacylglycerol kinase-like"/>
    <property type="match status" value="1"/>
</dbReference>
<comment type="function">
    <text evidence="1">Involved in the regulation of the intracellular balance of NAD and NADP, and is a key enzyme in the biosynthesis of NADP. Catalyzes specifically the phosphorylation on 2'-hydroxyl of the adenosine moiety of NAD to yield NADP.</text>
</comment>
<comment type="catalytic activity">
    <reaction evidence="1">
        <text>NAD(+) + ATP = ADP + NADP(+) + H(+)</text>
        <dbReference type="Rhea" id="RHEA:18629"/>
        <dbReference type="ChEBI" id="CHEBI:15378"/>
        <dbReference type="ChEBI" id="CHEBI:30616"/>
        <dbReference type="ChEBI" id="CHEBI:57540"/>
        <dbReference type="ChEBI" id="CHEBI:58349"/>
        <dbReference type="ChEBI" id="CHEBI:456216"/>
        <dbReference type="EC" id="2.7.1.23"/>
    </reaction>
</comment>
<comment type="cofactor">
    <cofactor evidence="1">
        <name>a divalent metal cation</name>
        <dbReference type="ChEBI" id="CHEBI:60240"/>
    </cofactor>
</comment>
<comment type="subcellular location">
    <subcellularLocation>
        <location evidence="1">Cytoplasm</location>
    </subcellularLocation>
</comment>
<comment type="similarity">
    <text evidence="1">Belongs to the NAD kinase family.</text>
</comment>
<accession>Q1R8A9</accession>
<organism>
    <name type="scientific">Escherichia coli (strain UTI89 / UPEC)</name>
    <dbReference type="NCBI Taxonomy" id="364106"/>
    <lineage>
        <taxon>Bacteria</taxon>
        <taxon>Pseudomonadati</taxon>
        <taxon>Pseudomonadota</taxon>
        <taxon>Gammaproteobacteria</taxon>
        <taxon>Enterobacterales</taxon>
        <taxon>Enterobacteriaceae</taxon>
        <taxon>Escherichia</taxon>
    </lineage>
</organism>
<reference key="1">
    <citation type="journal article" date="2006" name="Proc. Natl. Acad. Sci. U.S.A.">
        <title>Identification of genes subject to positive selection in uropathogenic strains of Escherichia coli: a comparative genomics approach.</title>
        <authorList>
            <person name="Chen S.L."/>
            <person name="Hung C.-S."/>
            <person name="Xu J."/>
            <person name="Reigstad C.S."/>
            <person name="Magrini V."/>
            <person name="Sabo A."/>
            <person name="Blasiar D."/>
            <person name="Bieri T."/>
            <person name="Meyer R.R."/>
            <person name="Ozersky P."/>
            <person name="Armstrong J.R."/>
            <person name="Fulton R.S."/>
            <person name="Latreille J.P."/>
            <person name="Spieth J."/>
            <person name="Hooton T.M."/>
            <person name="Mardis E.R."/>
            <person name="Hultgren S.J."/>
            <person name="Gordon J.I."/>
        </authorList>
    </citation>
    <scope>NUCLEOTIDE SEQUENCE [LARGE SCALE GENOMIC DNA]</scope>
    <source>
        <strain>UTI89 / UPEC</strain>
    </source>
</reference>
<name>NADK_ECOUT</name>
<keyword id="KW-0067">ATP-binding</keyword>
<keyword id="KW-0963">Cytoplasm</keyword>
<keyword id="KW-0418">Kinase</keyword>
<keyword id="KW-0520">NAD</keyword>
<keyword id="KW-0521">NADP</keyword>
<keyword id="KW-0547">Nucleotide-binding</keyword>
<keyword id="KW-0808">Transferase</keyword>
<protein>
    <recommendedName>
        <fullName evidence="1">NAD kinase</fullName>
        <ecNumber evidence="1">2.7.1.23</ecNumber>
    </recommendedName>
    <alternativeName>
        <fullName evidence="1">ATP-dependent NAD kinase</fullName>
    </alternativeName>
</protein>
<gene>
    <name evidence="1" type="primary">nadK</name>
    <name type="ordered locus">UTI89_C2949</name>
</gene>
<proteinExistence type="inferred from homology"/>
<sequence>MNNHFKCIGIVGHPRHPTALTTHEMLYRWLCTKGYEVIVEQQIAHELQLKNVKTGTLAEIGQQADLAVVVGGDGNMLGAARTLARYDIKVIGINRGNLGFLTDLDPDNAQQQLADVLEGHYISEKRFLLEAQVCQQDCQKRISTAINEVVLHPGKVAHMIEFEVYIDEIFAFSQRSDGLIISTPTGSTAYSLSAGGPILTPSLDAITLVPMFPHTLSARPLVINSSSTIRLRFSHRRNDLEISCDSQIALPIQEGEDVLIRRCDYHLNLIHPKDYSYFNTLSTKLGWSKKLF</sequence>
<evidence type="ECO:0000255" key="1">
    <source>
        <dbReference type="HAMAP-Rule" id="MF_00361"/>
    </source>
</evidence>